<proteinExistence type="inferred from homology"/>
<comment type="function">
    <text evidence="1">Catalyzes the attachment of serine to tRNA(Ser). Is also able to aminoacylate tRNA(Sec) with serine, to form the misacylated tRNA L-seryl-tRNA(Sec), which will be further converted into selenocysteinyl-tRNA(Sec).</text>
</comment>
<comment type="catalytic activity">
    <reaction evidence="1">
        <text>tRNA(Ser) + L-serine + ATP = L-seryl-tRNA(Ser) + AMP + diphosphate + H(+)</text>
        <dbReference type="Rhea" id="RHEA:12292"/>
        <dbReference type="Rhea" id="RHEA-COMP:9669"/>
        <dbReference type="Rhea" id="RHEA-COMP:9703"/>
        <dbReference type="ChEBI" id="CHEBI:15378"/>
        <dbReference type="ChEBI" id="CHEBI:30616"/>
        <dbReference type="ChEBI" id="CHEBI:33019"/>
        <dbReference type="ChEBI" id="CHEBI:33384"/>
        <dbReference type="ChEBI" id="CHEBI:78442"/>
        <dbReference type="ChEBI" id="CHEBI:78533"/>
        <dbReference type="ChEBI" id="CHEBI:456215"/>
        <dbReference type="EC" id="6.1.1.11"/>
    </reaction>
</comment>
<comment type="catalytic activity">
    <reaction evidence="1">
        <text>tRNA(Sec) + L-serine + ATP = L-seryl-tRNA(Sec) + AMP + diphosphate + H(+)</text>
        <dbReference type="Rhea" id="RHEA:42580"/>
        <dbReference type="Rhea" id="RHEA-COMP:9742"/>
        <dbReference type="Rhea" id="RHEA-COMP:10128"/>
        <dbReference type="ChEBI" id="CHEBI:15378"/>
        <dbReference type="ChEBI" id="CHEBI:30616"/>
        <dbReference type="ChEBI" id="CHEBI:33019"/>
        <dbReference type="ChEBI" id="CHEBI:33384"/>
        <dbReference type="ChEBI" id="CHEBI:78442"/>
        <dbReference type="ChEBI" id="CHEBI:78533"/>
        <dbReference type="ChEBI" id="CHEBI:456215"/>
        <dbReference type="EC" id="6.1.1.11"/>
    </reaction>
</comment>
<comment type="pathway">
    <text evidence="1">Aminoacyl-tRNA biosynthesis; selenocysteinyl-tRNA(Sec) biosynthesis; L-seryl-tRNA(Sec) from L-serine and tRNA(Sec): step 1/1.</text>
</comment>
<comment type="subunit">
    <text evidence="1">Homodimer. The tRNA molecule binds across the dimer.</text>
</comment>
<comment type="subcellular location">
    <subcellularLocation>
        <location evidence="1">Cytoplasm</location>
    </subcellularLocation>
</comment>
<comment type="domain">
    <text evidence="1">Consists of two distinct domains, a catalytic core and a N-terminal extension that is involved in tRNA binding.</text>
</comment>
<comment type="similarity">
    <text evidence="1">Belongs to the class-II aminoacyl-tRNA synthetase family. Type-1 seryl-tRNA synthetase subfamily.</text>
</comment>
<organism>
    <name type="scientific">Hahella chejuensis (strain KCTC 2396)</name>
    <dbReference type="NCBI Taxonomy" id="349521"/>
    <lineage>
        <taxon>Bacteria</taxon>
        <taxon>Pseudomonadati</taxon>
        <taxon>Pseudomonadota</taxon>
        <taxon>Gammaproteobacteria</taxon>
        <taxon>Oceanospirillales</taxon>
        <taxon>Hahellaceae</taxon>
        <taxon>Hahella</taxon>
    </lineage>
</organism>
<keyword id="KW-0030">Aminoacyl-tRNA synthetase</keyword>
<keyword id="KW-0067">ATP-binding</keyword>
<keyword id="KW-0963">Cytoplasm</keyword>
<keyword id="KW-0436">Ligase</keyword>
<keyword id="KW-0547">Nucleotide-binding</keyword>
<keyword id="KW-0648">Protein biosynthesis</keyword>
<keyword id="KW-1185">Reference proteome</keyword>
<dbReference type="EC" id="6.1.1.11" evidence="1"/>
<dbReference type="EMBL" id="CP000155">
    <property type="protein sequence ID" value="ABC29256.1"/>
    <property type="molecule type" value="Genomic_DNA"/>
</dbReference>
<dbReference type="RefSeq" id="WP_011396325.1">
    <property type="nucleotide sequence ID" value="NC_007645.1"/>
</dbReference>
<dbReference type="SMR" id="Q2SJB8"/>
<dbReference type="STRING" id="349521.HCH_02449"/>
<dbReference type="KEGG" id="hch:HCH_02449"/>
<dbReference type="eggNOG" id="COG0172">
    <property type="taxonomic scope" value="Bacteria"/>
</dbReference>
<dbReference type="HOGENOM" id="CLU_023797_1_1_6"/>
<dbReference type="OrthoDB" id="9804647at2"/>
<dbReference type="UniPathway" id="UPA00906">
    <property type="reaction ID" value="UER00895"/>
</dbReference>
<dbReference type="Proteomes" id="UP000000238">
    <property type="component" value="Chromosome"/>
</dbReference>
<dbReference type="GO" id="GO:0005737">
    <property type="term" value="C:cytoplasm"/>
    <property type="evidence" value="ECO:0007669"/>
    <property type="project" value="UniProtKB-SubCell"/>
</dbReference>
<dbReference type="GO" id="GO:0005524">
    <property type="term" value="F:ATP binding"/>
    <property type="evidence" value="ECO:0007669"/>
    <property type="project" value="UniProtKB-UniRule"/>
</dbReference>
<dbReference type="GO" id="GO:0004828">
    <property type="term" value="F:serine-tRNA ligase activity"/>
    <property type="evidence" value="ECO:0007669"/>
    <property type="project" value="UniProtKB-UniRule"/>
</dbReference>
<dbReference type="GO" id="GO:0016260">
    <property type="term" value="P:selenocysteine biosynthetic process"/>
    <property type="evidence" value="ECO:0007669"/>
    <property type="project" value="UniProtKB-UniRule"/>
</dbReference>
<dbReference type="GO" id="GO:0006434">
    <property type="term" value="P:seryl-tRNA aminoacylation"/>
    <property type="evidence" value="ECO:0007669"/>
    <property type="project" value="UniProtKB-UniRule"/>
</dbReference>
<dbReference type="CDD" id="cd00770">
    <property type="entry name" value="SerRS_core"/>
    <property type="match status" value="1"/>
</dbReference>
<dbReference type="Gene3D" id="3.30.930.10">
    <property type="entry name" value="Bira Bifunctional Protein, Domain 2"/>
    <property type="match status" value="1"/>
</dbReference>
<dbReference type="Gene3D" id="1.10.287.40">
    <property type="entry name" value="Serine-tRNA synthetase, tRNA binding domain"/>
    <property type="match status" value="1"/>
</dbReference>
<dbReference type="HAMAP" id="MF_00176">
    <property type="entry name" value="Ser_tRNA_synth_type1"/>
    <property type="match status" value="1"/>
</dbReference>
<dbReference type="InterPro" id="IPR002314">
    <property type="entry name" value="aa-tRNA-synt_IIb"/>
</dbReference>
<dbReference type="InterPro" id="IPR006195">
    <property type="entry name" value="aa-tRNA-synth_II"/>
</dbReference>
<dbReference type="InterPro" id="IPR045864">
    <property type="entry name" value="aa-tRNA-synth_II/BPL/LPL"/>
</dbReference>
<dbReference type="InterPro" id="IPR002317">
    <property type="entry name" value="Ser-tRNA-ligase_type_1"/>
</dbReference>
<dbReference type="InterPro" id="IPR015866">
    <property type="entry name" value="Ser-tRNA-synth_1_N"/>
</dbReference>
<dbReference type="InterPro" id="IPR042103">
    <property type="entry name" value="SerRS_1_N_sf"/>
</dbReference>
<dbReference type="InterPro" id="IPR033729">
    <property type="entry name" value="SerRS_core"/>
</dbReference>
<dbReference type="InterPro" id="IPR010978">
    <property type="entry name" value="tRNA-bd_arm"/>
</dbReference>
<dbReference type="NCBIfam" id="TIGR00414">
    <property type="entry name" value="serS"/>
    <property type="match status" value="1"/>
</dbReference>
<dbReference type="PANTHER" id="PTHR43697:SF1">
    <property type="entry name" value="SERINE--TRNA LIGASE"/>
    <property type="match status" value="1"/>
</dbReference>
<dbReference type="PANTHER" id="PTHR43697">
    <property type="entry name" value="SERYL-TRNA SYNTHETASE"/>
    <property type="match status" value="1"/>
</dbReference>
<dbReference type="Pfam" id="PF02403">
    <property type="entry name" value="Seryl_tRNA_N"/>
    <property type="match status" value="1"/>
</dbReference>
<dbReference type="Pfam" id="PF00587">
    <property type="entry name" value="tRNA-synt_2b"/>
    <property type="match status" value="1"/>
</dbReference>
<dbReference type="PIRSF" id="PIRSF001529">
    <property type="entry name" value="Ser-tRNA-synth_IIa"/>
    <property type="match status" value="1"/>
</dbReference>
<dbReference type="PRINTS" id="PR00981">
    <property type="entry name" value="TRNASYNTHSER"/>
</dbReference>
<dbReference type="SUPFAM" id="SSF55681">
    <property type="entry name" value="Class II aaRS and biotin synthetases"/>
    <property type="match status" value="1"/>
</dbReference>
<dbReference type="SUPFAM" id="SSF46589">
    <property type="entry name" value="tRNA-binding arm"/>
    <property type="match status" value="1"/>
</dbReference>
<dbReference type="PROSITE" id="PS50862">
    <property type="entry name" value="AA_TRNA_LIGASE_II"/>
    <property type="match status" value="1"/>
</dbReference>
<protein>
    <recommendedName>
        <fullName evidence="1">Serine--tRNA ligase</fullName>
        <ecNumber evidence="1">6.1.1.11</ecNumber>
    </recommendedName>
    <alternativeName>
        <fullName evidence="1">Seryl-tRNA synthetase</fullName>
        <shortName evidence="1">SerRS</shortName>
    </alternativeName>
    <alternativeName>
        <fullName evidence="1">Seryl-tRNA(Ser/Sec) synthetase</fullName>
    </alternativeName>
</protein>
<feature type="chain" id="PRO_1000019694" description="Serine--tRNA ligase">
    <location>
        <begin position="1"/>
        <end position="427"/>
    </location>
</feature>
<feature type="binding site" evidence="1">
    <location>
        <begin position="231"/>
        <end position="233"/>
    </location>
    <ligand>
        <name>L-serine</name>
        <dbReference type="ChEBI" id="CHEBI:33384"/>
    </ligand>
</feature>
<feature type="binding site" evidence="1">
    <location>
        <begin position="262"/>
        <end position="264"/>
    </location>
    <ligand>
        <name>ATP</name>
        <dbReference type="ChEBI" id="CHEBI:30616"/>
    </ligand>
</feature>
<feature type="binding site" evidence="1">
    <location>
        <position position="285"/>
    </location>
    <ligand>
        <name>L-serine</name>
        <dbReference type="ChEBI" id="CHEBI:33384"/>
    </ligand>
</feature>
<feature type="binding site" evidence="1">
    <location>
        <begin position="349"/>
        <end position="352"/>
    </location>
    <ligand>
        <name>ATP</name>
        <dbReference type="ChEBI" id="CHEBI:30616"/>
    </ligand>
</feature>
<feature type="binding site" evidence="1">
    <location>
        <position position="385"/>
    </location>
    <ligand>
        <name>L-serine</name>
        <dbReference type="ChEBI" id="CHEBI:33384"/>
    </ligand>
</feature>
<sequence>MLDPKLLRNSLDEVAARLKTKRYDLDVDAFSQLEERRKSVQVRTEELQSERNSKSKNIGMMIKQGQDPQPLKDEVAKIGEQLETAKAELQDIQDKLDDLLQGIPNLPDASVPEGASEDDNVEVRQWGSVREFDFEPKDHVDLGESLGLLDFNSGAKLAGSRFVVMRRELARLHRALAQFMLDIHTTEHGYQETMTPFLVHAHALQGTGQLPKFEADLFKVPGEHDFYLIPTAEVPVTNLVREEILDAKELPLKMTSHTPCFRSEAGSYGRDVRGMIRQHQFEKVELIHVVAPEQSDAALEELTGNAERILQLLNLPYRVVALCGGDLGFSAAKTYDIEVWLPAQKKYREISSCSNCRDFQARRMQARWRNPETGKPELVHTLNGSGLAIGRTLIAVLENYQQADGSILVPDVLEPYMGGVKVIKSAN</sequence>
<gene>
    <name evidence="1" type="primary">serS</name>
    <name type="ordered locus">HCH_02449</name>
</gene>
<accession>Q2SJB8</accession>
<reference key="1">
    <citation type="journal article" date="2005" name="Nucleic Acids Res.">
        <title>Genomic blueprint of Hahella chejuensis, a marine microbe producing an algicidal agent.</title>
        <authorList>
            <person name="Jeong H."/>
            <person name="Yim J.H."/>
            <person name="Lee C."/>
            <person name="Choi S.-H."/>
            <person name="Park Y.K."/>
            <person name="Yoon S.H."/>
            <person name="Hur C.-G."/>
            <person name="Kang H.-Y."/>
            <person name="Kim D."/>
            <person name="Lee H.H."/>
            <person name="Park K.H."/>
            <person name="Park S.-H."/>
            <person name="Park H.-S."/>
            <person name="Lee H.K."/>
            <person name="Oh T.K."/>
            <person name="Kim J.F."/>
        </authorList>
    </citation>
    <scope>NUCLEOTIDE SEQUENCE [LARGE SCALE GENOMIC DNA]</scope>
    <source>
        <strain>KCTC 2396</strain>
    </source>
</reference>
<evidence type="ECO:0000255" key="1">
    <source>
        <dbReference type="HAMAP-Rule" id="MF_00176"/>
    </source>
</evidence>
<name>SYS_HAHCH</name>